<organism>
    <name type="scientific">Klebsiella oxytoca</name>
    <dbReference type="NCBI Taxonomy" id="571"/>
    <lineage>
        <taxon>Bacteria</taxon>
        <taxon>Pseudomonadati</taxon>
        <taxon>Pseudomonadota</taxon>
        <taxon>Gammaproteobacteria</taxon>
        <taxon>Enterobacterales</taxon>
        <taxon>Enterobacteriaceae</taxon>
        <taxon>Klebsiella/Raoultella group</taxon>
        <taxon>Klebsiella</taxon>
    </lineage>
</organism>
<evidence type="ECO:0000250" key="1"/>
<evidence type="ECO:0000255" key="2">
    <source>
        <dbReference type="PROSITE-ProRule" id="PRU10001"/>
    </source>
</evidence>
<evidence type="ECO:0000269" key="3">
    <source>
    </source>
</evidence>
<evidence type="ECO:0000269" key="4">
    <source>
    </source>
</evidence>
<evidence type="ECO:0000305" key="5"/>
<evidence type="ECO:0007829" key="6">
    <source>
        <dbReference type="PDB" id="6IXJ"/>
    </source>
</evidence>
<protein>
    <recommendedName>
        <fullName>Sulfoacetaldehyde reductase</fullName>
        <ecNumber>1.1.1.313</ecNumber>
    </recommendedName>
    <alternativeName>
        <fullName>Isethionate formation reductase</fullName>
    </alternativeName>
</protein>
<reference key="1">
    <citation type="journal article" date="2005" name="Arch. Microbiol.">
        <title>Isethionate as a product from taurine during nitrogen-limited growth of Klebsiella oxytoca TauN1.</title>
        <authorList>
            <person name="Styp von Rekowski K."/>
            <person name="Denger K."/>
            <person name="Cook A.M."/>
        </authorList>
    </citation>
    <scope>NUCLEOTIDE SEQUENCE [GENOMIC DNA]</scope>
    <scope>PROTEIN SEQUENCE OF 2-11</scope>
    <scope>CATALYTIC ACTIVITY</scope>
    <source>
        <strain>TauN1</strain>
    </source>
</reference>
<reference key="2">
    <citation type="journal article" date="2010" name="Microbiology">
        <title>Isethionate formation from taurine in Chromohalobacter salexigens: purification of sulfoacetaldehyde reductase.</title>
        <authorList>
            <person name="Krejcik Z."/>
            <person name="Hollemeyer K."/>
            <person name="Smits T.H."/>
            <person name="Cook A.M."/>
        </authorList>
    </citation>
    <scope>NUCLEOTIDE SEQUENCE [GENOMIC DNA]</scope>
    <scope>FUNCTION</scope>
    <scope>CATALYTIC ACTIVITY</scope>
    <source>
        <strain>TauN1</strain>
    </source>
</reference>
<gene>
    <name type="primary">isfD</name>
</gene>
<sequence length="254" mass="27296">MATSKVVFITGATSGFGEAAAQVFADAGWSLVLSGRRFERLKTLQDKLASQVPVHIIELDVRDSDSVAAAVAALPADFADITTLINNAGLALSPQPAQKVDLDDWKTMIDTNVTGLVNVTHALLPTLINHGAGASIINIGSIAGQWPYPGSHVYGASKAFVKQFSYNLRCDLLGTGVRVTDLAPGIAETEFTLVRTKGDQAASDNLYRGTTPLSARDIAEQMFYIATLPDHMNINRVEVMPVRQAWQPFAIDRD</sequence>
<keyword id="KW-0002">3D-structure</keyword>
<keyword id="KW-0903">Direct protein sequencing</keyword>
<keyword id="KW-0521">NADP</keyword>
<keyword id="KW-0560">Oxidoreductase</keyword>
<name>ISFD_KLEOX</name>
<proteinExistence type="evidence at protein level"/>
<accession>D3U1D9</accession>
<dbReference type="EC" id="1.1.1.313"/>
<dbReference type="EMBL" id="FJ711704">
    <property type="protein sequence ID" value="ACV83928.1"/>
    <property type="molecule type" value="Genomic_DNA"/>
</dbReference>
<dbReference type="EMBL" id="GQ168677">
    <property type="protein sequence ID" value="ADK20104.1"/>
    <property type="molecule type" value="Genomic_DNA"/>
</dbReference>
<dbReference type="PDB" id="6IXJ">
    <property type="method" value="X-ray"/>
    <property type="resolution" value="2.80 A"/>
    <property type="chains" value="A/B/C/D/E/F/G/H/I/J/K/L=1-254"/>
</dbReference>
<dbReference type="PDBsum" id="6IXJ"/>
<dbReference type="SMR" id="D3U1D9"/>
<dbReference type="STRING" id="571.AB185_28375"/>
<dbReference type="PATRIC" id="fig|571.110.peg.1505"/>
<dbReference type="eggNOG" id="COG4221">
    <property type="taxonomic scope" value="Bacteria"/>
</dbReference>
<dbReference type="BioCyc" id="MetaCyc:MONOMER-16212"/>
<dbReference type="GO" id="GO:0016491">
    <property type="term" value="F:oxidoreductase activity"/>
    <property type="evidence" value="ECO:0007669"/>
    <property type="project" value="UniProtKB-KW"/>
</dbReference>
<dbReference type="FunFam" id="3.40.50.720:FF:000047">
    <property type="entry name" value="NADP-dependent L-serine/L-allo-threonine dehydrogenase"/>
    <property type="match status" value="1"/>
</dbReference>
<dbReference type="Gene3D" id="3.40.50.720">
    <property type="entry name" value="NAD(P)-binding Rossmann-like Domain"/>
    <property type="match status" value="1"/>
</dbReference>
<dbReference type="InterPro" id="IPR036291">
    <property type="entry name" value="NAD(P)-bd_dom_sf"/>
</dbReference>
<dbReference type="InterPro" id="IPR020904">
    <property type="entry name" value="Sc_DH/Rdtase_CS"/>
</dbReference>
<dbReference type="InterPro" id="IPR002347">
    <property type="entry name" value="SDR_fam"/>
</dbReference>
<dbReference type="PANTHER" id="PTHR42901">
    <property type="entry name" value="ALCOHOL DEHYDROGENASE"/>
    <property type="match status" value="1"/>
</dbReference>
<dbReference type="PANTHER" id="PTHR42901:SF1">
    <property type="entry name" value="ALCOHOL DEHYDROGENASE"/>
    <property type="match status" value="1"/>
</dbReference>
<dbReference type="Pfam" id="PF00106">
    <property type="entry name" value="adh_short"/>
    <property type="match status" value="1"/>
</dbReference>
<dbReference type="PRINTS" id="PR00081">
    <property type="entry name" value="GDHRDH"/>
</dbReference>
<dbReference type="PRINTS" id="PR00080">
    <property type="entry name" value="SDRFAMILY"/>
</dbReference>
<dbReference type="SMART" id="SM00822">
    <property type="entry name" value="PKS_KR"/>
    <property type="match status" value="1"/>
</dbReference>
<dbReference type="SUPFAM" id="SSF51735">
    <property type="entry name" value="NAD(P)-binding Rossmann-fold domains"/>
    <property type="match status" value="1"/>
</dbReference>
<dbReference type="PROSITE" id="PS00061">
    <property type="entry name" value="ADH_SHORT"/>
    <property type="match status" value="1"/>
</dbReference>
<comment type="function">
    <text evidence="4">Catalyzes the formation of isethionate from 2-sulfoacetaldehyde in the deaminative pathway of taurine. The enzyme is specific for NADPH; NADH is not a substrate.</text>
</comment>
<comment type="catalytic activity">
    <reaction evidence="3 4">
        <text>2-hydroxyethane-1-sulfonate + NADP(+) = sulfoacetaldehyde + NADPH + H(+)</text>
        <dbReference type="Rhea" id="RHEA:29591"/>
        <dbReference type="ChEBI" id="CHEBI:15378"/>
        <dbReference type="ChEBI" id="CHEBI:57783"/>
        <dbReference type="ChEBI" id="CHEBI:58246"/>
        <dbReference type="ChEBI" id="CHEBI:58349"/>
        <dbReference type="ChEBI" id="CHEBI:61904"/>
        <dbReference type="EC" id="1.1.1.313"/>
    </reaction>
</comment>
<comment type="pathway">
    <text>Organosulfur degradation.</text>
</comment>
<comment type="subunit">
    <text evidence="1">Homodimer and heterotetramer.</text>
</comment>
<comment type="similarity">
    <text evidence="5">Belongs to the short-chain dehydrogenases/reductases (SDR) family.</text>
</comment>
<feature type="initiator methionine" description="Removed" evidence="3">
    <location>
        <position position="1"/>
    </location>
</feature>
<feature type="chain" id="PRO_0000418489" description="Sulfoacetaldehyde reductase">
    <location>
        <begin position="2"/>
        <end position="254"/>
    </location>
</feature>
<feature type="active site" description="Proton acceptor" evidence="2">
    <location>
        <position position="154"/>
    </location>
</feature>
<feature type="binding site" evidence="1">
    <location>
        <begin position="8"/>
        <end position="32"/>
    </location>
    <ligand>
        <name>NADP(+)</name>
        <dbReference type="ChEBI" id="CHEBI:58349"/>
    </ligand>
</feature>
<feature type="binding site" evidence="1">
    <location>
        <position position="141"/>
    </location>
    <ligand>
        <name>substrate</name>
    </ligand>
</feature>
<feature type="strand" evidence="6">
    <location>
        <begin position="6"/>
        <end position="11"/>
    </location>
</feature>
<feature type="helix" evidence="6">
    <location>
        <begin position="15"/>
        <end position="25"/>
    </location>
</feature>
<feature type="turn" evidence="6">
    <location>
        <begin position="26"/>
        <end position="28"/>
    </location>
</feature>
<feature type="strand" evidence="6">
    <location>
        <begin position="30"/>
        <end position="36"/>
    </location>
</feature>
<feature type="helix" evidence="6">
    <location>
        <begin position="38"/>
        <end position="48"/>
    </location>
</feature>
<feature type="turn" evidence="6">
    <location>
        <begin position="49"/>
        <end position="51"/>
    </location>
</feature>
<feature type="strand" evidence="6">
    <location>
        <begin position="54"/>
        <end position="58"/>
    </location>
</feature>
<feature type="helix" evidence="6">
    <location>
        <begin position="64"/>
        <end position="72"/>
    </location>
</feature>
<feature type="turn" evidence="6">
    <location>
        <begin position="76"/>
        <end position="78"/>
    </location>
</feature>
<feature type="strand" evidence="6">
    <location>
        <begin position="79"/>
        <end position="86"/>
    </location>
</feature>
<feature type="helix" evidence="6">
    <location>
        <begin position="97"/>
        <end position="99"/>
    </location>
</feature>
<feature type="helix" evidence="6">
    <location>
        <begin position="102"/>
        <end position="112"/>
    </location>
</feature>
<feature type="helix" evidence="6">
    <location>
        <begin position="114"/>
        <end position="130"/>
    </location>
</feature>
<feature type="strand" evidence="6">
    <location>
        <begin position="135"/>
        <end position="139"/>
    </location>
</feature>
<feature type="helix" evidence="6">
    <location>
        <begin position="142"/>
        <end position="144"/>
    </location>
</feature>
<feature type="helix" evidence="6">
    <location>
        <begin position="152"/>
        <end position="171"/>
    </location>
</feature>
<feature type="strand" evidence="6">
    <location>
        <begin position="178"/>
        <end position="184"/>
    </location>
</feature>
<feature type="helix" evidence="6">
    <location>
        <begin position="191"/>
        <end position="195"/>
    </location>
</feature>
<feature type="helix" evidence="6">
    <location>
        <begin position="202"/>
        <end position="205"/>
    </location>
</feature>
<feature type="turn" evidence="6">
    <location>
        <begin position="206"/>
        <end position="209"/>
    </location>
</feature>
<feature type="helix" evidence="6">
    <location>
        <begin position="215"/>
        <end position="226"/>
    </location>
</feature>
<feature type="strand" evidence="6">
    <location>
        <begin position="232"/>
        <end position="241"/>
    </location>
</feature>
<feature type="strand" evidence="6">
    <location>
        <begin position="244"/>
        <end position="246"/>
    </location>
</feature>
<feature type="strand" evidence="6">
    <location>
        <begin position="249"/>
        <end position="251"/>
    </location>
</feature>